<evidence type="ECO:0000255" key="1"/>
<evidence type="ECO:0000256" key="2">
    <source>
        <dbReference type="SAM" id="MobiDB-lite"/>
    </source>
</evidence>
<evidence type="ECO:0000269" key="3">
    <source>
    </source>
</evidence>
<evidence type="ECO:0000269" key="4">
    <source>
    </source>
</evidence>
<evidence type="ECO:0000269" key="5">
    <source>
    </source>
</evidence>
<evidence type="ECO:0000303" key="6">
    <source>
    </source>
</evidence>
<evidence type="ECO:0000305" key="7"/>
<evidence type="ECO:0000305" key="8">
    <source>
    </source>
</evidence>
<gene>
    <name type="ORF">PITG_10232</name>
</gene>
<organism>
    <name type="scientific">Phytophthora infestans (strain T30-4)</name>
    <name type="common">Potato late blight agent</name>
    <dbReference type="NCBI Taxonomy" id="403677"/>
    <lineage>
        <taxon>Eukaryota</taxon>
        <taxon>Sar</taxon>
        <taxon>Stramenopiles</taxon>
        <taxon>Oomycota</taxon>
        <taxon>Peronosporales</taxon>
        <taxon>Peronosporaceae</taxon>
        <taxon>Phytophthora</taxon>
    </lineage>
</organism>
<name>RXLRI_PHYIT</name>
<keyword id="KW-1035">Host cytoplasm</keyword>
<keyword id="KW-1048">Host nucleus</keyword>
<keyword id="KW-1185">Reference proteome</keyword>
<keyword id="KW-0964">Secreted</keyword>
<keyword id="KW-0732">Signal</keyword>
<keyword id="KW-0843">Virulence</keyword>
<proteinExistence type="evidence at transcript level"/>
<protein>
    <recommendedName>
        <fullName evidence="6">RxLR effector protein PITG_10232</fullName>
    </recommendedName>
</protein>
<feature type="signal peptide" evidence="1">
    <location>
        <begin position="1"/>
        <end position="24"/>
    </location>
</feature>
<feature type="chain" id="PRO_5003013297" description="RxLR effector protein PITG_10232">
    <location>
        <begin position="25"/>
        <end position="173"/>
    </location>
</feature>
<feature type="region of interest" description="Disordered" evidence="2">
    <location>
        <begin position="25"/>
        <end position="64"/>
    </location>
</feature>
<feature type="short sequence motif" description="RxLR-dEER" evidence="8">
    <location>
        <begin position="46"/>
        <end position="65"/>
    </location>
</feature>
<feature type="compositionally biased region" description="Basic and acidic residues" evidence="2">
    <location>
        <begin position="37"/>
        <end position="49"/>
    </location>
</feature>
<sequence>MRLGYLIVGCAVALLATTDGVVDASSKHKQLSTDVPRPADDISSERFLRSQDTPEDDGNPAHEDRGYLTVLTNAAMHPLRERKMKNQIANLIKMDATDAELYAAGVQPHRLFDVIRHKDESVEMSLSQWVTMVHQHQFPSDYIWKSQAYRRFKQYAGFYDGMQRNGQRVASTT</sequence>
<comment type="function">
    <text evidence="5">Effector that leads to host programmed cell death.</text>
</comment>
<comment type="subcellular location">
    <subcellularLocation>
        <location evidence="5">Secreted</location>
    </subcellularLocation>
    <subcellularLocation>
        <location evidence="5">Host nucleus</location>
    </subcellularLocation>
    <subcellularLocation>
        <location evidence="5">Host cytoplasm</location>
    </subcellularLocation>
</comment>
<comment type="induction">
    <text evidence="3 4">Expression is induced during host plant infection.</text>
</comment>
<comment type="domain">
    <text evidence="8">The RxLR-dEER motif acts to carry the protein into the host cell cytoplasm through binding to cell surface phosphatidylinositol-3-phosphate.</text>
</comment>
<comment type="similarity">
    <text evidence="7">Belongs to the RxLR effector family.</text>
</comment>
<accession>D0NEV2</accession>
<reference key="1">
    <citation type="journal article" date="2009" name="Nature">
        <title>Genome sequence and analysis of the Irish potato famine pathogen Phytophthora infestans.</title>
        <authorList>
            <consortium name="The Broad Institute Genome Sequencing Platform"/>
            <person name="Haas B.J."/>
            <person name="Kamoun S."/>
            <person name="Zody M.C."/>
            <person name="Jiang R.H."/>
            <person name="Handsaker R.E."/>
            <person name="Cano L.M."/>
            <person name="Grabherr M."/>
            <person name="Kodira C.D."/>
            <person name="Raffaele S."/>
            <person name="Torto-Alalibo T."/>
            <person name="Bozkurt T.O."/>
            <person name="Ah-Fong A.M."/>
            <person name="Alvarado L."/>
            <person name="Anderson V.L."/>
            <person name="Armstrong M.R."/>
            <person name="Avrova A."/>
            <person name="Baxter L."/>
            <person name="Beynon J."/>
            <person name="Boevink P.C."/>
            <person name="Bollmann S.R."/>
            <person name="Bos J.I."/>
            <person name="Bulone V."/>
            <person name="Cai G."/>
            <person name="Cakir C."/>
            <person name="Carrington J.C."/>
            <person name="Chawner M."/>
            <person name="Conti L."/>
            <person name="Costanzo S."/>
            <person name="Ewan R."/>
            <person name="Fahlgren N."/>
            <person name="Fischbach M.A."/>
            <person name="Fugelstad J."/>
            <person name="Gilroy E.M."/>
            <person name="Gnerre S."/>
            <person name="Green P.J."/>
            <person name="Grenville-Briggs L.J."/>
            <person name="Griffith J."/>
            <person name="Grunwald N.J."/>
            <person name="Horn K."/>
            <person name="Horner N.R."/>
            <person name="Hu C.H."/>
            <person name="Huitema E."/>
            <person name="Jeong D.H."/>
            <person name="Jones A.M."/>
            <person name="Jones J.D."/>
            <person name="Jones R.W."/>
            <person name="Karlsson E.K."/>
            <person name="Kunjeti S.G."/>
            <person name="Lamour K."/>
            <person name="Liu Z."/>
            <person name="Ma L."/>
            <person name="Maclean D."/>
            <person name="Chibucos M.C."/>
            <person name="McDonald H."/>
            <person name="McWalters J."/>
            <person name="Meijer H.J."/>
            <person name="Morgan W."/>
            <person name="Morris P.F."/>
            <person name="Munro C.A."/>
            <person name="O'Neill K."/>
            <person name="Ospina-Giraldo M."/>
            <person name="Pinzon A."/>
            <person name="Pritchard L."/>
            <person name="Ramsahoye B."/>
            <person name="Ren Q."/>
            <person name="Restrepo S."/>
            <person name="Roy S."/>
            <person name="Sadanandom A."/>
            <person name="Savidor A."/>
            <person name="Schornack S."/>
            <person name="Schwartz D.C."/>
            <person name="Schumann U.D."/>
            <person name="Schwessinger B."/>
            <person name="Seyer L."/>
            <person name="Sharpe T."/>
            <person name="Silvar C."/>
            <person name="Song J."/>
            <person name="Studholme D.J."/>
            <person name="Sykes S."/>
            <person name="Thines M."/>
            <person name="van de Vondervoort P.J."/>
            <person name="Phuntumart V."/>
            <person name="Wawra S."/>
            <person name="Weide R."/>
            <person name="Win J."/>
            <person name="Young C."/>
            <person name="Zhou S."/>
            <person name="Fry W."/>
            <person name="Meyers B.C."/>
            <person name="van West P."/>
            <person name="Ristaino J."/>
            <person name="Govers F."/>
            <person name="Birch P.R."/>
            <person name="Whisson S.C."/>
            <person name="Judelson H.S."/>
            <person name="Nusbaum C."/>
        </authorList>
    </citation>
    <scope>NUCLEOTIDE SEQUENCE [LARGE SCALE GENOMIC DNA]</scope>
    <source>
        <strain>T30-4</strain>
    </source>
</reference>
<reference key="2">
    <citation type="journal article" date="2017" name="BMC Genomics">
        <title>RNA-seq of life stages of the oomycete Phytophthora infestans reveals dynamic changes in metabolic, signal transduction, and pathogenesis genes and a major role for calcium signaling in development.</title>
        <authorList>
            <person name="Ah-Fong A.M."/>
            <person name="Kim K.S."/>
            <person name="Judelson H.S."/>
        </authorList>
    </citation>
    <scope>INDUCTION</scope>
</reference>
<reference key="3">
    <citation type="journal article" date="2017" name="Front. Plant Sci.">
        <title>Conserved RXLR effector genes of Phytophthora infestans expressed at the early stage of potato infection are suppressive to host defense.</title>
        <authorList>
            <person name="Yin J."/>
            <person name="Gu B."/>
            <person name="Huang G."/>
            <person name="Tian Y."/>
            <person name="Quan J."/>
            <person name="Lindqvist-Kreuze H."/>
            <person name="Shan W."/>
        </authorList>
    </citation>
    <scope>INDUCTION</scope>
    <scope>DOMAIN</scope>
</reference>
<reference key="4">
    <citation type="journal article" date="2019" name="J. Exp. Bot.">
        <title>Phytophthora infestans RXLR effectors act in concert at diverse subcellular locations to enhance host colonization.</title>
        <authorList>
            <person name="Wang S."/>
            <person name="McLellan H."/>
            <person name="Bukharova T."/>
            <person name="He Q."/>
            <person name="Murphy F."/>
            <person name="Shi J."/>
            <person name="Sun S."/>
            <person name="van Weymers P."/>
            <person name="Ren Y."/>
            <person name="Thilliez G."/>
            <person name="Wang H."/>
            <person name="Chen X."/>
            <person name="Engelhardt S."/>
            <person name="Vleeshouwers V."/>
            <person name="Gilroy E.M."/>
            <person name="Whisson S.C."/>
            <person name="Hein I."/>
            <person name="Wang X."/>
            <person name="Tian Z."/>
            <person name="Birch P.R.J."/>
            <person name="Boevink P.C."/>
        </authorList>
    </citation>
    <scope>FUNCTION</scope>
    <scope>SUBCELLULAR LOCATION</scope>
</reference>
<dbReference type="EMBL" id="DS028135">
    <property type="protein sequence ID" value="EEY56741.1"/>
    <property type="molecule type" value="Genomic_DNA"/>
</dbReference>
<dbReference type="RefSeq" id="XP_002902069.1">
    <property type="nucleotide sequence ID" value="XM_002902023.1"/>
</dbReference>
<dbReference type="EnsemblProtists" id="PITG_10232T0">
    <property type="protein sequence ID" value="PITG_10232T0"/>
    <property type="gene ID" value="PITG_10232"/>
</dbReference>
<dbReference type="GeneID" id="9473890"/>
<dbReference type="KEGG" id="pif:PITG_10232"/>
<dbReference type="VEuPathDB" id="FungiDB:PITG_10232"/>
<dbReference type="HOGENOM" id="CLU_1550549_0_0_1"/>
<dbReference type="InParanoid" id="D0NEV2"/>
<dbReference type="Proteomes" id="UP000006643">
    <property type="component" value="Partially assembled WGS sequence"/>
</dbReference>
<dbReference type="GO" id="GO:0005576">
    <property type="term" value="C:extracellular region"/>
    <property type="evidence" value="ECO:0007669"/>
    <property type="project" value="UniProtKB-SubCell"/>
</dbReference>
<dbReference type="GO" id="GO:0030430">
    <property type="term" value="C:host cell cytoplasm"/>
    <property type="evidence" value="ECO:0007669"/>
    <property type="project" value="UniProtKB-SubCell"/>
</dbReference>
<dbReference type="GO" id="GO:0042025">
    <property type="term" value="C:host cell nucleus"/>
    <property type="evidence" value="ECO:0007669"/>
    <property type="project" value="UniProtKB-SubCell"/>
</dbReference>